<name>PHRG_BACSU</name>
<dbReference type="EMBL" id="AL009126">
    <property type="protein sequence ID" value="CAB16068.1"/>
    <property type="molecule type" value="Genomic_DNA"/>
</dbReference>
<dbReference type="PIR" id="D69677">
    <property type="entry name" value="D69677"/>
</dbReference>
<dbReference type="RefSeq" id="NP_391911.1">
    <property type="nucleotide sequence ID" value="NC_000964.3"/>
</dbReference>
<dbReference type="RefSeq" id="WP_003226961.1">
    <property type="nucleotide sequence ID" value="NZ_OZ025638.1"/>
</dbReference>
<dbReference type="FunCoup" id="O32295">
    <property type="interactions" value="197"/>
</dbReference>
<dbReference type="STRING" id="224308.BSU40310"/>
<dbReference type="PaxDb" id="224308-BSU40310"/>
<dbReference type="EnsemblBacteria" id="CAB16068">
    <property type="protein sequence ID" value="CAB16068"/>
    <property type="gene ID" value="BSU_40310"/>
</dbReference>
<dbReference type="GeneID" id="937767"/>
<dbReference type="KEGG" id="bsu:BSU40310"/>
<dbReference type="PATRIC" id="fig|224308.179.peg.4361"/>
<dbReference type="InParanoid" id="O32295"/>
<dbReference type="OrthoDB" id="2893424at2"/>
<dbReference type="BioCyc" id="BSUB:BSU40310-MONOMER"/>
<dbReference type="Proteomes" id="UP000001570">
    <property type="component" value="Chromosome"/>
</dbReference>
<dbReference type="GO" id="GO:0005737">
    <property type="term" value="C:cytoplasm"/>
    <property type="evidence" value="ECO:0007669"/>
    <property type="project" value="UniProtKB-SubCell"/>
</dbReference>
<dbReference type="GO" id="GO:0005576">
    <property type="term" value="C:extracellular region"/>
    <property type="evidence" value="ECO:0007669"/>
    <property type="project" value="UniProtKB-SubCell"/>
</dbReference>
<dbReference type="InterPro" id="IPR030968">
    <property type="entry name" value="RapG/K_inhib"/>
</dbReference>
<dbReference type="NCBIfam" id="TIGR04429">
    <property type="entry name" value="Phr_nterm"/>
    <property type="match status" value="1"/>
</dbReference>
<keyword id="KW-0963">Cytoplasm</keyword>
<keyword id="KW-1185">Reference proteome</keyword>
<keyword id="KW-0964">Secreted</keyword>
<protein>
    <recommendedName>
        <fullName evidence="3">RapG inhibitor</fullName>
    </recommendedName>
</protein>
<accession>O32295</accession>
<organism>
    <name type="scientific">Bacillus subtilis (strain 168)</name>
    <dbReference type="NCBI Taxonomy" id="224308"/>
    <lineage>
        <taxon>Bacteria</taxon>
        <taxon>Bacillati</taxon>
        <taxon>Bacillota</taxon>
        <taxon>Bacilli</taxon>
        <taxon>Bacillales</taxon>
        <taxon>Bacillaceae</taxon>
        <taxon>Bacillus</taxon>
    </lineage>
</organism>
<feature type="propeptide" id="PRO_0000457002" evidence="4">
    <location>
        <begin position="1"/>
        <end position="33"/>
    </location>
</feature>
<feature type="peptide" id="PRO_0000161732" description="RapG inhibitor" evidence="2">
    <location>
        <begin position="34"/>
        <end position="38"/>
    </location>
</feature>
<gene>
    <name type="primary">phrG</name>
    <name type="synonym">yycL</name>
    <name type="ordered locus">BSU40310</name>
</gene>
<proteinExistence type="evidence at transcript level"/>
<reference key="1">
    <citation type="journal article" date="1997" name="Nature">
        <title>The complete genome sequence of the Gram-positive bacterium Bacillus subtilis.</title>
        <authorList>
            <person name="Kunst F."/>
            <person name="Ogasawara N."/>
            <person name="Moszer I."/>
            <person name="Albertini A.M."/>
            <person name="Alloni G."/>
            <person name="Azevedo V."/>
            <person name="Bertero M.G."/>
            <person name="Bessieres P."/>
            <person name="Bolotin A."/>
            <person name="Borchert S."/>
            <person name="Borriss R."/>
            <person name="Boursier L."/>
            <person name="Brans A."/>
            <person name="Braun M."/>
            <person name="Brignell S.C."/>
            <person name="Bron S."/>
            <person name="Brouillet S."/>
            <person name="Bruschi C.V."/>
            <person name="Caldwell B."/>
            <person name="Capuano V."/>
            <person name="Carter N.M."/>
            <person name="Choi S.-K."/>
            <person name="Codani J.-J."/>
            <person name="Connerton I.F."/>
            <person name="Cummings N.J."/>
            <person name="Daniel R.A."/>
            <person name="Denizot F."/>
            <person name="Devine K.M."/>
            <person name="Duesterhoeft A."/>
            <person name="Ehrlich S.D."/>
            <person name="Emmerson P.T."/>
            <person name="Entian K.-D."/>
            <person name="Errington J."/>
            <person name="Fabret C."/>
            <person name="Ferrari E."/>
            <person name="Foulger D."/>
            <person name="Fritz C."/>
            <person name="Fujita M."/>
            <person name="Fujita Y."/>
            <person name="Fuma S."/>
            <person name="Galizzi A."/>
            <person name="Galleron N."/>
            <person name="Ghim S.-Y."/>
            <person name="Glaser P."/>
            <person name="Goffeau A."/>
            <person name="Golightly E.J."/>
            <person name="Grandi G."/>
            <person name="Guiseppi G."/>
            <person name="Guy B.J."/>
            <person name="Haga K."/>
            <person name="Haiech J."/>
            <person name="Harwood C.R."/>
            <person name="Henaut A."/>
            <person name="Hilbert H."/>
            <person name="Holsappel S."/>
            <person name="Hosono S."/>
            <person name="Hullo M.-F."/>
            <person name="Itaya M."/>
            <person name="Jones L.-M."/>
            <person name="Joris B."/>
            <person name="Karamata D."/>
            <person name="Kasahara Y."/>
            <person name="Klaerr-Blanchard M."/>
            <person name="Klein C."/>
            <person name="Kobayashi Y."/>
            <person name="Koetter P."/>
            <person name="Koningstein G."/>
            <person name="Krogh S."/>
            <person name="Kumano M."/>
            <person name="Kurita K."/>
            <person name="Lapidus A."/>
            <person name="Lardinois S."/>
            <person name="Lauber J."/>
            <person name="Lazarevic V."/>
            <person name="Lee S.-M."/>
            <person name="Levine A."/>
            <person name="Liu H."/>
            <person name="Masuda S."/>
            <person name="Mauel C."/>
            <person name="Medigue C."/>
            <person name="Medina N."/>
            <person name="Mellado R.P."/>
            <person name="Mizuno M."/>
            <person name="Moestl D."/>
            <person name="Nakai S."/>
            <person name="Noback M."/>
            <person name="Noone D."/>
            <person name="O'Reilly M."/>
            <person name="Ogawa K."/>
            <person name="Ogiwara A."/>
            <person name="Oudega B."/>
            <person name="Park S.-H."/>
            <person name="Parro V."/>
            <person name="Pohl T.M."/>
            <person name="Portetelle D."/>
            <person name="Porwollik S."/>
            <person name="Prescott A.M."/>
            <person name="Presecan E."/>
            <person name="Pujic P."/>
            <person name="Purnelle B."/>
            <person name="Rapoport G."/>
            <person name="Rey M."/>
            <person name="Reynolds S."/>
            <person name="Rieger M."/>
            <person name="Rivolta C."/>
            <person name="Rocha E."/>
            <person name="Roche B."/>
            <person name="Rose M."/>
            <person name="Sadaie Y."/>
            <person name="Sato T."/>
            <person name="Scanlan E."/>
            <person name="Schleich S."/>
            <person name="Schroeter R."/>
            <person name="Scoffone F."/>
            <person name="Sekiguchi J."/>
            <person name="Sekowska A."/>
            <person name="Seror S.J."/>
            <person name="Serror P."/>
            <person name="Shin B.-S."/>
            <person name="Soldo B."/>
            <person name="Sorokin A."/>
            <person name="Tacconi E."/>
            <person name="Takagi T."/>
            <person name="Takahashi H."/>
            <person name="Takemaru K."/>
            <person name="Takeuchi M."/>
            <person name="Tamakoshi A."/>
            <person name="Tanaka T."/>
            <person name="Terpstra P."/>
            <person name="Tognoni A."/>
            <person name="Tosato V."/>
            <person name="Uchiyama S."/>
            <person name="Vandenbol M."/>
            <person name="Vannier F."/>
            <person name="Vassarotti A."/>
            <person name="Viari A."/>
            <person name="Wambutt R."/>
            <person name="Wedler E."/>
            <person name="Wedler H."/>
            <person name="Weitzenegger T."/>
            <person name="Winters P."/>
            <person name="Wipat A."/>
            <person name="Yamamoto H."/>
            <person name="Yamane K."/>
            <person name="Yasumoto K."/>
            <person name="Yata K."/>
            <person name="Yoshida K."/>
            <person name="Yoshikawa H.-F."/>
            <person name="Zumstein E."/>
            <person name="Yoshikawa H."/>
            <person name="Danchin A."/>
        </authorList>
    </citation>
    <scope>NUCLEOTIDE SEQUENCE [LARGE SCALE GENOMIC DNA]</scope>
    <source>
        <strain>168</strain>
    </source>
</reference>
<reference key="2">
    <citation type="journal article" date="2003" name="Mol. Microbiol.">
        <title>Binding of response regulator DegU to the aprE promoter is inhibited by RapG, which is counteracted by extracellular PhrG in Bacillus subtilis.</title>
        <authorList>
            <person name="Ogura M."/>
            <person name="Shimane K."/>
            <person name="Asai K."/>
            <person name="Ogasawara N."/>
            <person name="Tanaka T."/>
        </authorList>
    </citation>
    <scope>FUNCTION</scope>
    <scope>INDUCTION</scope>
    <scope>DISRUPTION PHENOTYPE</scope>
</reference>
<comment type="function">
    <text evidence="1 2">Signaling molecule involved in the regulation of expression of DegU-controlled genes (PubMed:12950930). Secreted during production, but the mature peptide acts intracellularly, indicating that it needs to be imported into the cell to function (By similarity). Stimulates the DegU-dependent expression of aprE, an extracellular alkaline protease (PubMed:12950930). Acts by inhibiting RapG activity (PubMed:12950930). At high concentrations, represses the DegS-dependent aprE expression (PubMed:12950930).</text>
</comment>
<comment type="subcellular location">
    <subcellularLocation>
        <location evidence="1">Secreted</location>
    </subcellularLocation>
    <subcellularLocation>
        <location evidence="1">Cytoplasm</location>
    </subcellularLocation>
    <text evidence="1">Produced through an export-import maturation process.</text>
</comment>
<comment type="induction">
    <text evidence="2">Part of the rapG-phrG operon (PubMed:12950930). Transcription of phrG only is controlled by the sigma-H factor (PubMed:12950930). Expression is rapidly induced in the transition state to stationary phase (PubMed:12950930).</text>
</comment>
<comment type="PTM">
    <text evidence="1">Contains a predicted signal peptide cleavage site in the N-terminal region, however the propeptide is probably subject to only one processing event, at the N-terminal end of the mature peptide.</text>
</comment>
<comment type="disruption phenotype">
    <text evidence="2">Disruption of the gene results in the reduction of aprE expression.</text>
</comment>
<comment type="similarity">
    <text evidence="3">Belongs to the Phr family.</text>
</comment>
<evidence type="ECO:0000250" key="1">
    <source>
        <dbReference type="UniProtKB" id="P94416"/>
    </source>
</evidence>
<evidence type="ECO:0000269" key="2">
    <source>
    </source>
</evidence>
<evidence type="ECO:0000305" key="3"/>
<evidence type="ECO:0000305" key="4">
    <source>
    </source>
</evidence>
<sequence length="38" mass="4172">MKRFLIGAGVAAVILSGWFIADHQTHSQEMKVAEKMIG</sequence>